<sequence>MLTFFIGDLLPIIVIMLLGYFSGRRETFSEDQARAFNKLVLNYALPAALFVSITRANREMIFADTRLTLVSLVVIVGCFFFSWFGCYKFFKRTHAEAAVCALIAGSPTIGFLGFAVLDPIYGDSVSTGLVVAIISIIVNAITIPIGLYLLNPSSGADGKKNSNLSALISAAKEPVVWAPVLATILVLVGVKIPAAWDPTFNLIAKANSGVAVFAAGLTLAAHKFEFSAEIAYNTFLKLILMPLALLLVGMACHLNSEHLQMMVLAGALPPAFSGIIIASRFNVYTRTGTASLAVSVLGFVVTAPLWIYVSRLVS</sequence>
<comment type="subcellular location">
    <subcellularLocation>
        <location evidence="2">Cell membrane</location>
        <topology evidence="2">Multi-pass membrane protein</topology>
    </subcellularLocation>
</comment>
<comment type="similarity">
    <text evidence="2">Belongs to the auxin efflux carrier (TC 2.A.69) family.</text>
</comment>
<organism>
    <name type="scientific">Escherichia coli (strain K12)</name>
    <dbReference type="NCBI Taxonomy" id="83333"/>
    <lineage>
        <taxon>Bacteria</taxon>
        <taxon>Pseudomonadati</taxon>
        <taxon>Pseudomonadota</taxon>
        <taxon>Gammaproteobacteria</taxon>
        <taxon>Enterobacterales</taxon>
        <taxon>Enterobacteriaceae</taxon>
        <taxon>Escherichia</taxon>
    </lineage>
</organism>
<protein>
    <recommendedName>
        <fullName>Uncharacterized transporter YfdV</fullName>
    </recommendedName>
</protein>
<evidence type="ECO:0000255" key="1"/>
<evidence type="ECO:0000305" key="2"/>
<dbReference type="EMBL" id="U00096">
    <property type="protein sequence ID" value="AAC75431.1"/>
    <property type="molecule type" value="Genomic_DNA"/>
</dbReference>
<dbReference type="EMBL" id="AP009048">
    <property type="protein sequence ID" value="BAA16243.2"/>
    <property type="molecule type" value="Genomic_DNA"/>
</dbReference>
<dbReference type="PIR" id="A65011">
    <property type="entry name" value="A65011"/>
</dbReference>
<dbReference type="RefSeq" id="NP_416873.1">
    <property type="nucleotide sequence ID" value="NC_000913.3"/>
</dbReference>
<dbReference type="RefSeq" id="WP_000955028.1">
    <property type="nucleotide sequence ID" value="NZ_STEB01000008.1"/>
</dbReference>
<dbReference type="SMR" id="P0AA49"/>
<dbReference type="BioGRID" id="4259549">
    <property type="interactions" value="206"/>
</dbReference>
<dbReference type="DIP" id="DIP-28062N"/>
<dbReference type="FunCoup" id="P0AA49">
    <property type="interactions" value="234"/>
</dbReference>
<dbReference type="IntAct" id="P0AA49">
    <property type="interactions" value="1"/>
</dbReference>
<dbReference type="STRING" id="511145.b2372"/>
<dbReference type="PaxDb" id="511145-b2372"/>
<dbReference type="DNASU" id="949110"/>
<dbReference type="EnsemblBacteria" id="AAC75431">
    <property type="protein sequence ID" value="AAC75431"/>
    <property type="gene ID" value="b2372"/>
</dbReference>
<dbReference type="GeneID" id="93774757"/>
<dbReference type="GeneID" id="949110"/>
<dbReference type="KEGG" id="ecj:JW2369"/>
<dbReference type="KEGG" id="eco:b2372"/>
<dbReference type="KEGG" id="ecoc:C3026_13190"/>
<dbReference type="PATRIC" id="fig|1411691.4.peg.4357"/>
<dbReference type="EchoBASE" id="EB3896"/>
<dbReference type="eggNOG" id="COG0679">
    <property type="taxonomic scope" value="Bacteria"/>
</dbReference>
<dbReference type="HOGENOM" id="CLU_056175_0_0_6"/>
<dbReference type="InParanoid" id="P0AA49"/>
<dbReference type="OMA" id="LAMWITY"/>
<dbReference type="OrthoDB" id="109606at2"/>
<dbReference type="PhylomeDB" id="P0AA49"/>
<dbReference type="BioCyc" id="EcoCyc:B2372-MONOMER"/>
<dbReference type="PRO" id="PR:P0AA49"/>
<dbReference type="Proteomes" id="UP000000625">
    <property type="component" value="Chromosome"/>
</dbReference>
<dbReference type="GO" id="GO:0005886">
    <property type="term" value="C:plasma membrane"/>
    <property type="evidence" value="ECO:0000314"/>
    <property type="project" value="EcoCyc"/>
</dbReference>
<dbReference type="GO" id="GO:0055085">
    <property type="term" value="P:transmembrane transport"/>
    <property type="evidence" value="ECO:0007669"/>
    <property type="project" value="InterPro"/>
</dbReference>
<dbReference type="FunFam" id="1.20.1530.20:FF:000006">
    <property type="entry name" value="Putative transporter YfdV"/>
    <property type="match status" value="1"/>
</dbReference>
<dbReference type="Gene3D" id="1.20.1530.20">
    <property type="match status" value="1"/>
</dbReference>
<dbReference type="InterPro" id="IPR004776">
    <property type="entry name" value="Mem_transp_PIN-like"/>
</dbReference>
<dbReference type="InterPro" id="IPR038770">
    <property type="entry name" value="Na+/solute_symporter_sf"/>
</dbReference>
<dbReference type="NCBIfam" id="NF007384">
    <property type="entry name" value="PRK09903.1"/>
    <property type="match status" value="1"/>
</dbReference>
<dbReference type="PANTHER" id="PTHR36838">
    <property type="entry name" value="AUXIN EFFLUX CARRIER FAMILY PROTEIN"/>
    <property type="match status" value="1"/>
</dbReference>
<dbReference type="PANTHER" id="PTHR36838:SF1">
    <property type="entry name" value="SLR1864 PROTEIN"/>
    <property type="match status" value="1"/>
</dbReference>
<dbReference type="Pfam" id="PF03547">
    <property type="entry name" value="Mem_trans"/>
    <property type="match status" value="1"/>
</dbReference>
<feature type="chain" id="PRO_0000123799" description="Uncharacterized transporter YfdV">
    <location>
        <begin position="1"/>
        <end position="314"/>
    </location>
</feature>
<feature type="transmembrane region" description="Helical" evidence="1">
    <location>
        <begin position="4"/>
        <end position="23"/>
    </location>
</feature>
<feature type="transmembrane region" description="Helical" evidence="1">
    <location>
        <begin position="36"/>
        <end position="53"/>
    </location>
</feature>
<feature type="transmembrane region" description="Helical" evidence="1">
    <location>
        <begin position="68"/>
        <end position="90"/>
    </location>
</feature>
<feature type="transmembrane region" description="Helical" evidence="1">
    <location>
        <begin position="97"/>
        <end position="116"/>
    </location>
</feature>
<feature type="transmembrane region" description="Helical" evidence="1">
    <location>
        <begin position="131"/>
        <end position="153"/>
    </location>
</feature>
<feature type="transmembrane region" description="Helical" evidence="1">
    <location>
        <begin position="174"/>
        <end position="196"/>
    </location>
</feature>
<feature type="transmembrane region" description="Helical" evidence="1">
    <location>
        <begin position="200"/>
        <end position="222"/>
    </location>
</feature>
<feature type="transmembrane region" description="Helical" evidence="1">
    <location>
        <begin position="229"/>
        <end position="251"/>
    </location>
</feature>
<feature type="transmembrane region" description="Helical" evidence="1">
    <location>
        <begin position="261"/>
        <end position="283"/>
    </location>
</feature>
<feature type="transmembrane region" description="Helical" evidence="1">
    <location>
        <begin position="290"/>
        <end position="309"/>
    </location>
</feature>
<gene>
    <name type="primary">yfdV</name>
    <name type="ordered locus">b2372</name>
    <name type="ordered locus">JW2369</name>
</gene>
<keyword id="KW-1003">Cell membrane</keyword>
<keyword id="KW-0472">Membrane</keyword>
<keyword id="KW-1185">Reference proteome</keyword>
<keyword id="KW-0812">Transmembrane</keyword>
<keyword id="KW-1133">Transmembrane helix</keyword>
<keyword id="KW-0813">Transport</keyword>
<proteinExistence type="inferred from homology"/>
<accession>P0AA49</accession>
<accession>P76519</accession>
<accession>P76947</accession>
<accession>P76948</accession>
<name>YFDV_ECOLI</name>
<reference key="1">
    <citation type="journal article" date="1997" name="DNA Res.">
        <title>Construction of a contiguous 874-kb sequence of the Escherichia coli-K12 genome corresponding to 50.0-68.8 min on the linkage map and analysis of its sequence features.</title>
        <authorList>
            <person name="Yamamoto Y."/>
            <person name="Aiba H."/>
            <person name="Baba T."/>
            <person name="Hayashi K."/>
            <person name="Inada T."/>
            <person name="Isono K."/>
            <person name="Itoh T."/>
            <person name="Kimura S."/>
            <person name="Kitagawa M."/>
            <person name="Makino K."/>
            <person name="Miki T."/>
            <person name="Mitsuhashi N."/>
            <person name="Mizobuchi K."/>
            <person name="Mori H."/>
            <person name="Nakade S."/>
            <person name="Nakamura Y."/>
            <person name="Nashimoto H."/>
            <person name="Oshima T."/>
            <person name="Oyama S."/>
            <person name="Saito N."/>
            <person name="Sampei G."/>
            <person name="Satoh Y."/>
            <person name="Sivasundaram S."/>
            <person name="Tagami H."/>
            <person name="Takahashi H."/>
            <person name="Takeda J."/>
            <person name="Takemoto K."/>
            <person name="Uehara K."/>
            <person name="Wada C."/>
            <person name="Yamagata S."/>
            <person name="Horiuchi T."/>
        </authorList>
    </citation>
    <scope>NUCLEOTIDE SEQUENCE [LARGE SCALE GENOMIC DNA]</scope>
    <source>
        <strain>K12 / W3110 / ATCC 27325 / DSM 5911</strain>
    </source>
</reference>
<reference key="2">
    <citation type="journal article" date="1997" name="Science">
        <title>The complete genome sequence of Escherichia coli K-12.</title>
        <authorList>
            <person name="Blattner F.R."/>
            <person name="Plunkett G. III"/>
            <person name="Bloch C.A."/>
            <person name="Perna N.T."/>
            <person name="Burland V."/>
            <person name="Riley M."/>
            <person name="Collado-Vides J."/>
            <person name="Glasner J.D."/>
            <person name="Rode C.K."/>
            <person name="Mayhew G.F."/>
            <person name="Gregor J."/>
            <person name="Davis N.W."/>
            <person name="Kirkpatrick H.A."/>
            <person name="Goeden M.A."/>
            <person name="Rose D.J."/>
            <person name="Mau B."/>
            <person name="Shao Y."/>
        </authorList>
    </citation>
    <scope>NUCLEOTIDE SEQUENCE [LARGE SCALE GENOMIC DNA]</scope>
    <source>
        <strain>K12 / MG1655 / ATCC 47076</strain>
    </source>
</reference>
<reference key="3">
    <citation type="journal article" date="2006" name="Mol. Syst. Biol.">
        <title>Highly accurate genome sequences of Escherichia coli K-12 strains MG1655 and W3110.</title>
        <authorList>
            <person name="Hayashi K."/>
            <person name="Morooka N."/>
            <person name="Yamamoto Y."/>
            <person name="Fujita K."/>
            <person name="Isono K."/>
            <person name="Choi S."/>
            <person name="Ohtsubo E."/>
            <person name="Baba T."/>
            <person name="Wanner B.L."/>
            <person name="Mori H."/>
            <person name="Horiuchi T."/>
        </authorList>
    </citation>
    <scope>NUCLEOTIDE SEQUENCE [LARGE SCALE GENOMIC DNA]</scope>
    <scope>SEQUENCE REVISION</scope>
    <source>
        <strain>K12 / W3110 / ATCC 27325 / DSM 5911</strain>
    </source>
</reference>